<keyword id="KW-0067">ATP-binding</keyword>
<keyword id="KW-0436">Ligase</keyword>
<keyword id="KW-0547">Nucleotide-binding</keyword>
<keyword id="KW-0658">Purine biosynthesis</keyword>
<dbReference type="EC" id="6.3.2.6" evidence="1"/>
<dbReference type="EMBL" id="CP000325">
    <property type="protein sequence ID" value="ABL03199.1"/>
    <property type="molecule type" value="Genomic_DNA"/>
</dbReference>
<dbReference type="RefSeq" id="WP_011738824.1">
    <property type="nucleotide sequence ID" value="NC_008611.1"/>
</dbReference>
<dbReference type="SMR" id="A0PLI0"/>
<dbReference type="KEGG" id="mul:MUL_0497"/>
<dbReference type="eggNOG" id="COG0152">
    <property type="taxonomic scope" value="Bacteria"/>
</dbReference>
<dbReference type="HOGENOM" id="CLU_045637_0_0_11"/>
<dbReference type="UniPathway" id="UPA00074">
    <property type="reaction ID" value="UER00131"/>
</dbReference>
<dbReference type="Proteomes" id="UP000000765">
    <property type="component" value="Chromosome"/>
</dbReference>
<dbReference type="GO" id="GO:0005737">
    <property type="term" value="C:cytoplasm"/>
    <property type="evidence" value="ECO:0007669"/>
    <property type="project" value="TreeGrafter"/>
</dbReference>
<dbReference type="GO" id="GO:0005524">
    <property type="term" value="F:ATP binding"/>
    <property type="evidence" value="ECO:0007669"/>
    <property type="project" value="UniProtKB-KW"/>
</dbReference>
<dbReference type="GO" id="GO:0004639">
    <property type="term" value="F:phosphoribosylaminoimidazolesuccinocarboxamide synthase activity"/>
    <property type="evidence" value="ECO:0007669"/>
    <property type="project" value="UniProtKB-UniRule"/>
</dbReference>
<dbReference type="GO" id="GO:0006189">
    <property type="term" value="P:'de novo' IMP biosynthetic process"/>
    <property type="evidence" value="ECO:0007669"/>
    <property type="project" value="UniProtKB-UniRule"/>
</dbReference>
<dbReference type="CDD" id="cd01414">
    <property type="entry name" value="SAICAR_synt_Sc"/>
    <property type="match status" value="1"/>
</dbReference>
<dbReference type="FunFam" id="3.30.200.20:FF:000199">
    <property type="entry name" value="Phosphoribosylaminoimidazole-succinocarboxamide synthase"/>
    <property type="match status" value="1"/>
</dbReference>
<dbReference type="FunFam" id="3.30.470.20:FF:000015">
    <property type="entry name" value="Phosphoribosylaminoimidazole-succinocarboxamide synthase"/>
    <property type="match status" value="1"/>
</dbReference>
<dbReference type="Gene3D" id="3.30.470.20">
    <property type="entry name" value="ATP-grasp fold, B domain"/>
    <property type="match status" value="1"/>
</dbReference>
<dbReference type="Gene3D" id="3.30.200.20">
    <property type="entry name" value="Phosphorylase Kinase, domain 1"/>
    <property type="match status" value="1"/>
</dbReference>
<dbReference type="HAMAP" id="MF_00137">
    <property type="entry name" value="SAICAR_synth"/>
    <property type="match status" value="1"/>
</dbReference>
<dbReference type="InterPro" id="IPR028923">
    <property type="entry name" value="SAICAR_synt/ADE2_N"/>
</dbReference>
<dbReference type="InterPro" id="IPR001636">
    <property type="entry name" value="SAICAR_synth"/>
</dbReference>
<dbReference type="InterPro" id="IPR018236">
    <property type="entry name" value="SAICAR_synthetase_CS"/>
</dbReference>
<dbReference type="NCBIfam" id="NF010568">
    <property type="entry name" value="PRK13961.1"/>
    <property type="match status" value="1"/>
</dbReference>
<dbReference type="NCBIfam" id="TIGR00081">
    <property type="entry name" value="purC"/>
    <property type="match status" value="1"/>
</dbReference>
<dbReference type="PANTHER" id="PTHR43700">
    <property type="entry name" value="PHOSPHORIBOSYLAMINOIMIDAZOLE-SUCCINOCARBOXAMIDE SYNTHASE"/>
    <property type="match status" value="1"/>
</dbReference>
<dbReference type="PANTHER" id="PTHR43700:SF1">
    <property type="entry name" value="PHOSPHORIBOSYLAMINOIMIDAZOLE-SUCCINOCARBOXAMIDE SYNTHASE"/>
    <property type="match status" value="1"/>
</dbReference>
<dbReference type="Pfam" id="PF01259">
    <property type="entry name" value="SAICAR_synt"/>
    <property type="match status" value="1"/>
</dbReference>
<dbReference type="SUPFAM" id="SSF56104">
    <property type="entry name" value="SAICAR synthase-like"/>
    <property type="match status" value="1"/>
</dbReference>
<dbReference type="PROSITE" id="PS01057">
    <property type="entry name" value="SAICAR_SYNTHETASE_1"/>
    <property type="match status" value="1"/>
</dbReference>
<dbReference type="PROSITE" id="PS01058">
    <property type="entry name" value="SAICAR_SYNTHETASE_2"/>
    <property type="match status" value="1"/>
</dbReference>
<feature type="chain" id="PRO_1000018740" description="Phosphoribosylaminoimidazole-succinocarboxamide synthase">
    <location>
        <begin position="1"/>
        <end position="297"/>
    </location>
</feature>
<sequence>MRPQLSDYQHLASGKVRELYRVDDEHLLVVASDRISAYDYVLDSMIPDKGRILTAMSVFFFGLVDAPNHLAGPPDDPRIPDEVLGRALVVRQLEMLPVECVARGYLTGSGLLDYQASGKVCGIALPPGLVGASKFAEPLFTPATKAELGDHDENISFAQVIETVGGVRANQLRDRTLQIYVKAADHALTRGVIIADTKFEFGADRDGNLLLADEIFTPDSSRYWPADEYRAGVVQNSFDKQFVRNWLTSAESGWDRGGDQPPPPLPDHIIEATRERYIEAYERISGLGFGEWIGPGA</sequence>
<name>PUR7_MYCUA</name>
<evidence type="ECO:0000255" key="1">
    <source>
        <dbReference type="HAMAP-Rule" id="MF_00137"/>
    </source>
</evidence>
<organism>
    <name type="scientific">Mycobacterium ulcerans (strain Agy99)</name>
    <dbReference type="NCBI Taxonomy" id="362242"/>
    <lineage>
        <taxon>Bacteria</taxon>
        <taxon>Bacillati</taxon>
        <taxon>Actinomycetota</taxon>
        <taxon>Actinomycetes</taxon>
        <taxon>Mycobacteriales</taxon>
        <taxon>Mycobacteriaceae</taxon>
        <taxon>Mycobacterium</taxon>
        <taxon>Mycobacterium ulcerans group</taxon>
    </lineage>
</organism>
<accession>A0PLI0</accession>
<comment type="catalytic activity">
    <reaction evidence="1">
        <text>5-amino-1-(5-phospho-D-ribosyl)imidazole-4-carboxylate + L-aspartate + ATP = (2S)-2-[5-amino-1-(5-phospho-beta-D-ribosyl)imidazole-4-carboxamido]succinate + ADP + phosphate + 2 H(+)</text>
        <dbReference type="Rhea" id="RHEA:22628"/>
        <dbReference type="ChEBI" id="CHEBI:15378"/>
        <dbReference type="ChEBI" id="CHEBI:29991"/>
        <dbReference type="ChEBI" id="CHEBI:30616"/>
        <dbReference type="ChEBI" id="CHEBI:43474"/>
        <dbReference type="ChEBI" id="CHEBI:58443"/>
        <dbReference type="ChEBI" id="CHEBI:77657"/>
        <dbReference type="ChEBI" id="CHEBI:456216"/>
        <dbReference type="EC" id="6.3.2.6"/>
    </reaction>
</comment>
<comment type="pathway">
    <text evidence="1">Purine metabolism; IMP biosynthesis via de novo pathway; 5-amino-1-(5-phospho-D-ribosyl)imidazole-4-carboxamide from 5-amino-1-(5-phospho-D-ribosyl)imidazole-4-carboxylate: step 1/2.</text>
</comment>
<comment type="similarity">
    <text evidence="1">Belongs to the SAICAR synthetase family.</text>
</comment>
<protein>
    <recommendedName>
        <fullName evidence="1">Phosphoribosylaminoimidazole-succinocarboxamide synthase</fullName>
        <ecNumber evidence="1">6.3.2.6</ecNumber>
    </recommendedName>
    <alternativeName>
        <fullName evidence="1">SAICAR synthetase</fullName>
    </alternativeName>
</protein>
<gene>
    <name evidence="1" type="primary">purC</name>
    <name type="ordered locus">MUL_0497</name>
</gene>
<proteinExistence type="inferred from homology"/>
<reference key="1">
    <citation type="journal article" date="2007" name="Genome Res.">
        <title>Reductive evolution and niche adaptation inferred from the genome of Mycobacterium ulcerans, the causative agent of Buruli ulcer.</title>
        <authorList>
            <person name="Stinear T.P."/>
            <person name="Seemann T."/>
            <person name="Pidot S."/>
            <person name="Frigui W."/>
            <person name="Reysset G."/>
            <person name="Garnier T."/>
            <person name="Meurice G."/>
            <person name="Simon D."/>
            <person name="Bouchier C."/>
            <person name="Ma L."/>
            <person name="Tichit M."/>
            <person name="Porter J.L."/>
            <person name="Ryan J."/>
            <person name="Johnson P.D.R."/>
            <person name="Davies J.K."/>
            <person name="Jenkin G.A."/>
            <person name="Small P.L.C."/>
            <person name="Jones L.M."/>
            <person name="Tekaia F."/>
            <person name="Laval F."/>
            <person name="Daffe M."/>
            <person name="Parkhill J."/>
            <person name="Cole S.T."/>
        </authorList>
    </citation>
    <scope>NUCLEOTIDE SEQUENCE [LARGE SCALE GENOMIC DNA]</scope>
    <source>
        <strain>Agy99</strain>
    </source>
</reference>